<protein>
    <recommendedName>
        <fullName evidence="3">Antimicrobial peptide marcin-18</fullName>
    </recommendedName>
</protein>
<comment type="function">
    <text evidence="2">Antimicrobial peptide with potent activity against bacteria. Acts by fastly disrupting the bacterial membrane. Shows activity against Gram-positive bacteria S.aureus (MIC=1.5-2.9 uM) and S.epidermidis (MIC=2.9 uM), M.luteus (MIC=23.4 uM), B.thuringiensis (MIC=2.9 uM), B.subtilis (MIC=2.9 uM) and Gram-negative bacteria E.coli (MIC=5.9-11.7 uM) and P.aeruginosa (MIC=5.9 uM), as well as against penicillin (MIC=2.9 uM) and methicillin (MIC=1.5-2.9 uM) resistant bacteria. Antibiotic activity is not affected by major negatively charged components of the prokaryotic cell wall (e.g. lipopolysaccharides and lipoteichoic acid). In vivo, in a mouse model of lethal peritonitis, shows potent antibiotic activity without cytotoxicity, improving the survival rate.</text>
</comment>
<comment type="biophysicochemical properties">
    <phDependence>
        <text evidence="2">Has great tolerance to the acidic, neutral and alkaline environments.</text>
    </phDependence>
</comment>
<comment type="subcellular location">
    <subcellularLocation>
        <location evidence="2">Secreted</location>
    </subcellularLocation>
    <subcellularLocation>
        <location evidence="4">Target cell membrane</location>
    </subcellularLocation>
</comment>
<comment type="tissue specificity">
    <text evidence="5">Expressed by the venom gland.</text>
</comment>
<comment type="domain">
    <text evidence="5">Amphipathic and cationic peptide with an alpha-helical structure.</text>
</comment>
<comment type="similarity">
    <text evidence="4">Belongs to the non-disulfide-bridged peptide (NDBP) superfamily. Medium-length antimicrobial peptide (group 3) family.</text>
</comment>
<reference evidence="6" key="1">
    <citation type="submission" date="2010-05" db="EMBL/GenBank/DDBJ databases">
        <title>Molecular and functional characterization of meucin-18-related antimicrobial peptides in Mesobuthus.</title>
        <authorList>
            <person name="Gao B."/>
            <person name="Zhu S."/>
        </authorList>
    </citation>
    <scope>NUCLEOTIDE SEQUENCE [MRNA]</scope>
</reference>
<reference key="2">
    <citation type="journal article" date="2013" name="Nat. Commun.">
        <title>The genome of Mesobuthus martensii reveals a unique adaptation model of arthropods.</title>
        <authorList>
            <person name="Cao Z."/>
            <person name="Yu Y."/>
            <person name="Wu Y."/>
            <person name="Hao P."/>
            <person name="Di Z."/>
            <person name="He Y."/>
            <person name="Chen Z."/>
            <person name="Yang W."/>
            <person name="Shen Z."/>
            <person name="He X."/>
            <person name="Sheng J."/>
            <person name="Xu X."/>
            <person name="Pan B."/>
            <person name="Feng J."/>
            <person name="Yang X."/>
            <person name="Hong W."/>
            <person name="Zhao W."/>
            <person name="Li Z."/>
            <person name="Huang K."/>
            <person name="Li T."/>
            <person name="Kong Y."/>
            <person name="Liu H."/>
            <person name="Jiang D."/>
            <person name="Zhang B."/>
            <person name="Hu J."/>
            <person name="Hu Y."/>
            <person name="Wang B."/>
            <person name="Dai J."/>
            <person name="Yuan B."/>
            <person name="Feng Y."/>
            <person name="Huang W."/>
            <person name="Xing X."/>
            <person name="Zhao G."/>
            <person name="Li X."/>
            <person name="Li Y."/>
            <person name="Li W."/>
        </authorList>
    </citation>
    <scope>NUCLEOTIDE SEQUENCE [LARGE SCALE GENOMIC DNA]</scope>
    <source>
        <tissue>Muscle</tissue>
    </source>
</reference>
<reference evidence="6" key="3">
    <citation type="journal article" date="2018" name="Front. Microbiol.">
        <title>Therapeutic potential of a scorpion venom-derived antimicrobial peptide and its homologs against antibiotic-resistant Gram-positive bacteria.</title>
        <authorList>
            <person name="Liu G."/>
            <person name="Yang F."/>
            <person name="Li F."/>
            <person name="Li Z."/>
            <person name="Lang Y."/>
            <person name="Shen B."/>
            <person name="Wu Y."/>
            <person name="Li W."/>
            <person name="Harrison P.L."/>
            <person name="Strong P.N."/>
            <person name="Xie Y."/>
            <person name="Miller K."/>
            <person name="Cao Z."/>
        </authorList>
    </citation>
    <scope>NUCLEOTIDE SEQUENCE [GENOMIC DNA]</scope>
    <scope>PROTEIN SEQUENCE OF 31-41</scope>
    <scope>FUNCTION</scope>
    <scope>BIOASSAY</scope>
    <scope>SYNTHESIS OF 24-41</scope>
    <scope>IDENTIFICATION BY MASS SPECTROMETRY</scope>
    <scope>SUBCELLULAR LOCATION</scope>
    <scope>PROBABLE AMIDATION AT ARG-41</scope>
    <scope>BIOPHYSICOCHEMICAL PROPERTIES</scope>
    <scope>CIRCULAR DICHROISM ANALYSIS</scope>
    <source>
        <tissue>Venom</tissue>
    </source>
</reference>
<feature type="signal peptide" evidence="1">
    <location>
        <begin position="1"/>
        <end position="23"/>
    </location>
</feature>
<feature type="peptide" id="PRO_5003342856" description="Antimicrobial peptide marcin-18">
    <location>
        <begin position="24"/>
        <end position="41"/>
    </location>
</feature>
<feature type="propeptide" id="PRO_0000461846" evidence="5">
    <location>
        <begin position="42"/>
        <end position="78"/>
    </location>
</feature>
<feature type="modified residue" description="Arginine amide" evidence="5">
    <location>
        <position position="41"/>
    </location>
</feature>
<keyword id="KW-0027">Amidation</keyword>
<keyword id="KW-0044">Antibiotic</keyword>
<keyword id="KW-0929">Antimicrobial</keyword>
<keyword id="KW-0165">Cleavage on pair of basic residues</keyword>
<keyword id="KW-0903">Direct protein sequencing</keyword>
<keyword id="KW-0472">Membrane</keyword>
<keyword id="KW-0964">Secreted</keyword>
<keyword id="KW-0732">Signal</keyword>
<keyword id="KW-1052">Target cell membrane</keyword>
<keyword id="KW-1053">Target membrane</keyword>
<dbReference type="EMBL" id="HM235676">
    <property type="protein sequence ID" value="ADT89762.1"/>
    <property type="molecule type" value="mRNA"/>
</dbReference>
<dbReference type="GO" id="GO:0005576">
    <property type="term" value="C:extracellular region"/>
    <property type="evidence" value="ECO:0007669"/>
    <property type="project" value="UniProtKB-SubCell"/>
</dbReference>
<dbReference type="GO" id="GO:0016020">
    <property type="term" value="C:membrane"/>
    <property type="evidence" value="ECO:0007669"/>
    <property type="project" value="UniProtKB-KW"/>
</dbReference>
<dbReference type="GO" id="GO:0044218">
    <property type="term" value="C:other organism cell membrane"/>
    <property type="evidence" value="ECO:0007669"/>
    <property type="project" value="UniProtKB-KW"/>
</dbReference>
<dbReference type="GO" id="GO:0042742">
    <property type="term" value="P:defense response to bacterium"/>
    <property type="evidence" value="ECO:0007669"/>
    <property type="project" value="UniProtKB-KW"/>
</dbReference>
<organism>
    <name type="scientific">Olivierus martensii</name>
    <name type="common">Manchurian scorpion</name>
    <name type="synonym">Mesobuthus martensii</name>
    <dbReference type="NCBI Taxonomy" id="34649"/>
    <lineage>
        <taxon>Eukaryota</taxon>
        <taxon>Metazoa</taxon>
        <taxon>Ecdysozoa</taxon>
        <taxon>Arthropoda</taxon>
        <taxon>Chelicerata</taxon>
        <taxon>Arachnida</taxon>
        <taxon>Scorpiones</taxon>
        <taxon>Buthida</taxon>
        <taxon>Buthoidea</taxon>
        <taxon>Buthidae</taxon>
        <taxon>Olivierus</taxon>
    </lineage>
</organism>
<accession>F6K5S6</accession>
<sequence>MQFKKQLMVIFLAYFLVVNESEAFFGHLFKLATKIIPSLFRRKNQRSRSIMKRDLENLFDPYQRNLELDRLLKQLPNY</sequence>
<name>NDBM_OLIMR</name>
<proteinExistence type="evidence at protein level"/>
<evidence type="ECO:0000255" key="1"/>
<evidence type="ECO:0000269" key="2">
    <source>
    </source>
</evidence>
<evidence type="ECO:0000303" key="3">
    <source>
    </source>
</evidence>
<evidence type="ECO:0000305" key="4"/>
<evidence type="ECO:0000305" key="5">
    <source>
    </source>
</evidence>
<evidence type="ECO:0000312" key="6">
    <source>
        <dbReference type="EMBL" id="ADT89762.1"/>
    </source>
</evidence>